<dbReference type="EMBL" id="CU928160">
    <property type="protein sequence ID" value="CAQ98863.1"/>
    <property type="molecule type" value="Genomic_DNA"/>
</dbReference>
<dbReference type="RefSeq" id="WP_001015030.1">
    <property type="nucleotide sequence ID" value="NC_011741.1"/>
</dbReference>
<dbReference type="SMR" id="B7M371"/>
<dbReference type="KEGG" id="ecr:ECIAI1_2012"/>
<dbReference type="HOGENOM" id="CLU_155793_1_1_6"/>
<dbReference type="GO" id="GO:0005829">
    <property type="term" value="C:cytosol"/>
    <property type="evidence" value="ECO:0007669"/>
    <property type="project" value="UniProtKB-SubCell"/>
</dbReference>
<dbReference type="GO" id="GO:0044781">
    <property type="term" value="P:bacterial-type flagellum organization"/>
    <property type="evidence" value="ECO:0007669"/>
    <property type="project" value="UniProtKB-KW"/>
</dbReference>
<dbReference type="GO" id="GO:1902209">
    <property type="term" value="P:negative regulation of bacterial-type flagellum assembly"/>
    <property type="evidence" value="ECO:0007669"/>
    <property type="project" value="UniProtKB-UniRule"/>
</dbReference>
<dbReference type="GO" id="GO:0006457">
    <property type="term" value="P:protein folding"/>
    <property type="evidence" value="ECO:0007669"/>
    <property type="project" value="UniProtKB-UniRule"/>
</dbReference>
<dbReference type="FunFam" id="1.20.58.380:FF:000001">
    <property type="entry name" value="Flagellar protein FliT"/>
    <property type="match status" value="1"/>
</dbReference>
<dbReference type="Gene3D" id="1.20.58.380">
    <property type="entry name" value="Flagellar protein flit"/>
    <property type="match status" value="1"/>
</dbReference>
<dbReference type="HAMAP" id="MF_01180">
    <property type="entry name" value="FliT"/>
    <property type="match status" value="1"/>
</dbReference>
<dbReference type="InterPro" id="IPR008622">
    <property type="entry name" value="FliT"/>
</dbReference>
<dbReference type="NCBIfam" id="NF007836">
    <property type="entry name" value="PRK10548.1"/>
    <property type="match status" value="1"/>
</dbReference>
<dbReference type="Pfam" id="PF05400">
    <property type="entry name" value="FliT"/>
    <property type="match status" value="1"/>
</dbReference>
<name>FLIT_ECO8A</name>
<organism>
    <name type="scientific">Escherichia coli O8 (strain IAI1)</name>
    <dbReference type="NCBI Taxonomy" id="585034"/>
    <lineage>
        <taxon>Bacteria</taxon>
        <taxon>Pseudomonadati</taxon>
        <taxon>Pseudomonadota</taxon>
        <taxon>Gammaproteobacteria</taxon>
        <taxon>Enterobacterales</taxon>
        <taxon>Enterobacteriaceae</taxon>
        <taxon>Escherichia</taxon>
    </lineage>
</organism>
<comment type="function">
    <text evidence="1">Dual-function protein that regulates the transcription of class 2 flagellar operons and that also acts as an export chaperone for the filament-capping protein FliD. As a transcriptional regulator, acts as an anti-FlhDC factor; it directly binds FlhC, thus inhibiting the binding of the FlhC/FlhD complex to class 2 promoters, resulting in decreased expression of class 2 flagellar operons. As a chaperone, effects FliD transition to the membrane by preventing its premature polymerization, and by directing it to the export apparatus.</text>
</comment>
<comment type="subunit">
    <text evidence="1">Homodimer. Interacts with FliD and FlhC.</text>
</comment>
<comment type="subcellular location">
    <subcellularLocation>
        <location evidence="1">Cytoplasm</location>
        <location evidence="1">Cytosol</location>
    </subcellularLocation>
</comment>
<comment type="similarity">
    <text evidence="1">Belongs to the FliT family.</text>
</comment>
<feature type="chain" id="PRO_1000138178" description="Flagellar protein FliT">
    <location>
        <begin position="1"/>
        <end position="121"/>
    </location>
</feature>
<feature type="region of interest" description="Required for homodimerization" evidence="1">
    <location>
        <begin position="1"/>
        <end position="50"/>
    </location>
</feature>
<feature type="region of interest" description="FliD binding" evidence="1">
    <location>
        <begin position="60"/>
        <end position="98"/>
    </location>
</feature>
<keyword id="KW-1005">Bacterial flagellum biogenesis</keyword>
<keyword id="KW-0143">Chaperone</keyword>
<keyword id="KW-0963">Cytoplasm</keyword>
<keyword id="KW-0678">Repressor</keyword>
<keyword id="KW-0804">Transcription</keyword>
<keyword id="KW-0805">Transcription regulation</keyword>
<evidence type="ECO:0000255" key="1">
    <source>
        <dbReference type="HAMAP-Rule" id="MF_01180"/>
    </source>
</evidence>
<proteinExistence type="inferred from homology"/>
<accession>B7M371</accession>
<gene>
    <name evidence="1" type="primary">fliT</name>
    <name type="ordered locus">ECIAI1_2012</name>
</gene>
<reference key="1">
    <citation type="journal article" date="2009" name="PLoS Genet.">
        <title>Organised genome dynamics in the Escherichia coli species results in highly diverse adaptive paths.</title>
        <authorList>
            <person name="Touchon M."/>
            <person name="Hoede C."/>
            <person name="Tenaillon O."/>
            <person name="Barbe V."/>
            <person name="Baeriswyl S."/>
            <person name="Bidet P."/>
            <person name="Bingen E."/>
            <person name="Bonacorsi S."/>
            <person name="Bouchier C."/>
            <person name="Bouvet O."/>
            <person name="Calteau A."/>
            <person name="Chiapello H."/>
            <person name="Clermont O."/>
            <person name="Cruveiller S."/>
            <person name="Danchin A."/>
            <person name="Diard M."/>
            <person name="Dossat C."/>
            <person name="Karoui M.E."/>
            <person name="Frapy E."/>
            <person name="Garry L."/>
            <person name="Ghigo J.M."/>
            <person name="Gilles A.M."/>
            <person name="Johnson J."/>
            <person name="Le Bouguenec C."/>
            <person name="Lescat M."/>
            <person name="Mangenot S."/>
            <person name="Martinez-Jehanne V."/>
            <person name="Matic I."/>
            <person name="Nassif X."/>
            <person name="Oztas S."/>
            <person name="Petit M.A."/>
            <person name="Pichon C."/>
            <person name="Rouy Z."/>
            <person name="Ruf C.S."/>
            <person name="Schneider D."/>
            <person name="Tourret J."/>
            <person name="Vacherie B."/>
            <person name="Vallenet D."/>
            <person name="Medigue C."/>
            <person name="Rocha E.P.C."/>
            <person name="Denamur E."/>
        </authorList>
    </citation>
    <scope>NUCLEOTIDE SEQUENCE [LARGE SCALE GENOMIC DNA]</scope>
    <source>
        <strain>IAI1</strain>
    </source>
</reference>
<sequence>MNHAPHLYFAWQQLVEKSQLMLRLATEEQWDELIASEMAYVNAVQEIAHLTEEVAPSTTMQEQLRPMLRLILDNESKVKQLLQIRMDELAKLVGQSSVQKSVLSAYGDQGGFVLAPQDNFS</sequence>
<protein>
    <recommendedName>
        <fullName evidence="1">Flagellar protein FliT</fullName>
    </recommendedName>
</protein>